<feature type="chain" id="PRO_0000116260" description="Tegument protein BRRF2">
    <location>
        <begin position="1"/>
        <end position="537"/>
    </location>
</feature>
<feature type="region of interest" description="Disordered" evidence="1">
    <location>
        <begin position="321"/>
        <end position="366"/>
    </location>
</feature>
<feature type="region of interest" description="Disordered" evidence="1">
    <location>
        <begin position="378"/>
        <end position="398"/>
    </location>
</feature>
<feature type="region of interest" description="Disordered" evidence="1">
    <location>
        <begin position="414"/>
        <end position="466"/>
    </location>
</feature>
<feature type="region of interest" description="Disordered" evidence="1">
    <location>
        <begin position="486"/>
        <end position="537"/>
    </location>
</feature>
<feature type="compositionally biased region" description="Polar residues" evidence="1">
    <location>
        <begin position="334"/>
        <end position="347"/>
    </location>
</feature>
<feature type="compositionally biased region" description="Low complexity" evidence="1">
    <location>
        <begin position="423"/>
        <end position="441"/>
    </location>
</feature>
<feature type="compositionally biased region" description="Acidic residues" evidence="1">
    <location>
        <begin position="492"/>
        <end position="517"/>
    </location>
</feature>
<organismHost>
    <name type="scientific">Homo sapiens</name>
    <name type="common">Human</name>
    <dbReference type="NCBI Taxonomy" id="9606"/>
</organismHost>
<keyword id="KW-1185">Reference proteome</keyword>
<keyword id="KW-0946">Virion</keyword>
<keyword id="KW-0920">Virion tegument</keyword>
<evidence type="ECO:0000256" key="1">
    <source>
        <dbReference type="SAM" id="MobiDB-lite"/>
    </source>
</evidence>
<evidence type="ECO:0000305" key="2"/>
<accession>P03210</accession>
<accession>Q777E2</accession>
<comment type="subcellular location">
    <subcellularLocation>
        <location evidence="2">Virion tegument</location>
    </subcellularLocation>
</comment>
<comment type="similarity">
    <text evidence="2">Belongs to the lymphocryptovirus BRRF2 family.</text>
</comment>
<proteinExistence type="inferred from homology"/>
<protein>
    <recommendedName>
        <fullName>Tegument protein BRRF2</fullName>
    </recommendedName>
</protein>
<dbReference type="EMBL" id="V01555">
    <property type="protein sequence ID" value="CAA24815.1"/>
    <property type="molecule type" value="Genomic_DNA"/>
</dbReference>
<dbReference type="EMBL" id="AJ507799">
    <property type="protein sequence ID" value="CAD53426.1"/>
    <property type="molecule type" value="Genomic_DNA"/>
</dbReference>
<dbReference type="PIR" id="B43043">
    <property type="entry name" value="QQBE30"/>
</dbReference>
<dbReference type="RefSeq" id="YP_401676.1">
    <property type="nucleotide sequence ID" value="NC_007605.1"/>
</dbReference>
<dbReference type="iPTMnet" id="P03210"/>
<dbReference type="DNASU" id="3783729"/>
<dbReference type="GeneID" id="3783729"/>
<dbReference type="KEGG" id="vg:3783729"/>
<dbReference type="Proteomes" id="UP000153037">
    <property type="component" value="Segment"/>
</dbReference>
<dbReference type="GO" id="GO:0019033">
    <property type="term" value="C:viral tegument"/>
    <property type="evidence" value="ECO:0007669"/>
    <property type="project" value="UniProtKB-SubCell"/>
</dbReference>
<dbReference type="InterPro" id="IPR008550">
    <property type="entry name" value="Herpesvirus_BRRF2-like"/>
</dbReference>
<dbReference type="Pfam" id="PF05734">
    <property type="entry name" value="DUF832"/>
    <property type="match status" value="1"/>
</dbReference>
<reference key="1">
    <citation type="journal article" date="1984" name="Nature">
        <title>DNA sequence and expression of the B95-8 Epstein-Barr virus genome.</title>
        <authorList>
            <person name="Baer R."/>
            <person name="Bankier A.T."/>
            <person name="Biggin M.D."/>
            <person name="Deininger P.L."/>
            <person name="Farrell P.J."/>
            <person name="Gibson T.J."/>
            <person name="Hatfull G."/>
            <person name="Hudson G.S."/>
            <person name="Satchwell S.C."/>
            <person name="Seguin C."/>
            <person name="Tuffnell P.S."/>
            <person name="Barrell B.G."/>
        </authorList>
    </citation>
    <scope>NUCLEOTIDE SEQUENCE [LARGE SCALE GENOMIC DNA]</scope>
</reference>
<reference key="2">
    <citation type="journal article" date="2003" name="Virology">
        <title>Updated Epstein-Barr virus (EBV) DNA sequence and analysis of a promoter for the BART (CST, BARF0) RNAs of EBV.</title>
        <authorList>
            <person name="de Jesus O."/>
            <person name="Smith P.R."/>
            <person name="Spender L.C."/>
            <person name="Elgueta Karstegl C."/>
            <person name="Niller H.H."/>
            <person name="Huang D."/>
            <person name="Farrell P.J."/>
        </authorList>
    </citation>
    <scope>GENOME REANNOTATION</scope>
</reference>
<reference key="3">
    <citation type="journal article" date="2004" name="Proc. Natl. Acad. Sci. U.S.A.">
        <title>Proteins of purified Epstein-Barr virus.</title>
        <authorList>
            <person name="Johannsen E."/>
            <person name="Luftig M."/>
            <person name="Chase M.R."/>
            <person name="Weicksel S."/>
            <person name="Cahir-McFarland E."/>
            <person name="Illanes D."/>
            <person name="Sarracino D."/>
            <person name="Kieff E."/>
        </authorList>
    </citation>
    <scope>SUBCELLULAR LOCATION</scope>
</reference>
<gene>
    <name type="ORF">BRRF2</name>
</gene>
<sequence length="537" mass="56955">MSGQQRGSVILVPEHLAGALTKLMSDFITGQDVTLSGGNIAVKIRDAINQTPGGGDVAILSSLFALWNALPTSGRQSSRDDLIPAAVQALTTAHNLCLGVIPGETSHKDTPESLLRAIVTGLQKLWVDSCGCPECLQCLKGLKAIKPGLYEIPRIIPHTKQCSPVNLLNMLVHKLVALRGHVQLAYDARVLTPDFHEIPDLDDSDAVFARTLLAALFHLNMFFILKDYITQDSMSLKQALSGHWMSATGNPLPAAPETLRDYLEAFRNSDNHFYLPTTGPLNTFQFPEELLGRVVVIDSSLCAASHVQDVITHGVGAGVPRPRFSALPPAPSREPQQTCSQLTSRGNESSRRNLGQPGGTSPAVPPVCPIVSLTASGAKQNRGGMGSLHLAKPEETSPAVSPVCPIASPAASRSKQHCGVTGSSQAAPSFSSVAPVASLSGDLEEEEEGSRESPSLPSSKKGDEEFEAWLEAQDANLEDVQREFSGLRVIGDEDEDGSEDGEFSDLDLSDSDHEGDEGGGAVGGGRSLHSLYSLSVV</sequence>
<organism>
    <name type="scientific">Epstein-Barr virus (strain B95-8)</name>
    <name type="common">HHV-4</name>
    <name type="synonym">Human herpesvirus 4</name>
    <dbReference type="NCBI Taxonomy" id="10377"/>
    <lineage>
        <taxon>Viruses</taxon>
        <taxon>Duplodnaviria</taxon>
        <taxon>Heunggongvirae</taxon>
        <taxon>Peploviricota</taxon>
        <taxon>Herviviricetes</taxon>
        <taxon>Herpesvirales</taxon>
        <taxon>Orthoherpesviridae</taxon>
        <taxon>Gammaherpesvirinae</taxon>
        <taxon>Lymphocryptovirus</taxon>
        <taxon>Lymphocryptovirus humangamma4</taxon>
        <taxon>Epstein-Barr virus (strain GD1)</taxon>
    </lineage>
</organism>
<name>BRRF2_EBVB9</name>